<evidence type="ECO:0000255" key="1">
    <source>
        <dbReference type="HAMAP-Rule" id="MF_00570"/>
    </source>
</evidence>
<keyword id="KW-0436">Ligase</keyword>
<keyword id="KW-0597">Phosphoprotein</keyword>
<keyword id="KW-0662">Pyridine nucleotide biosynthesis</keyword>
<proteinExistence type="inferred from homology"/>
<sequence>MTQFASPVLHSLLDTDAYKLHMQQAVFHHYYDVQVAAEFRCRGDDLLGIYADAIREQVDAMQHLRLQEDEFQWLSGLPFFKPDYLNWLREFRYNPAQVCVTNDNGKLNIRLTGPWREVIMWEVPLLAVISELVHHYRSPNAGVDQALDALESKLVDFTALTANLDMSRFHLMDFGTRRRFSREVQQAIVKRLQQESWFVGTSNYDLARRLALTPMGTQAHEWFQAHQQISPDLATSQRAALAAWLNEYPDQLGIALTDCITMDAFLRDFGIEFASRYQGLRHDSGDPVAWGEKAIAHYEKLGIDPLTKTLVFSDNLDLQKAVELYRHFASRVQLSFGIGTRLTCDIPQVKPLNIVIKLVECNGKPVAKLSDSPGKTICHDKAFVRALRKAFDLPQVRKAS</sequence>
<reference key="1">
    <citation type="journal article" date="2004" name="Nat. Genet.">
        <title>Comparison of genome degradation in Paratyphi A and Typhi, human-restricted serovars of Salmonella enterica that cause typhoid.</title>
        <authorList>
            <person name="McClelland M."/>
            <person name="Sanderson K.E."/>
            <person name="Clifton S.W."/>
            <person name="Latreille P."/>
            <person name="Porwollik S."/>
            <person name="Sabo A."/>
            <person name="Meyer R."/>
            <person name="Bieri T."/>
            <person name="Ozersky P."/>
            <person name="McLellan M."/>
            <person name="Harkins C.R."/>
            <person name="Wang C."/>
            <person name="Nguyen C."/>
            <person name="Berghoff A."/>
            <person name="Elliott G."/>
            <person name="Kohlberg S."/>
            <person name="Strong C."/>
            <person name="Du F."/>
            <person name="Carter J."/>
            <person name="Kremizki C."/>
            <person name="Layman D."/>
            <person name="Leonard S."/>
            <person name="Sun H."/>
            <person name="Fulton L."/>
            <person name="Nash W."/>
            <person name="Miner T."/>
            <person name="Minx P."/>
            <person name="Delehaunty K."/>
            <person name="Fronick C."/>
            <person name="Magrini V."/>
            <person name="Nhan M."/>
            <person name="Warren W."/>
            <person name="Florea L."/>
            <person name="Spieth J."/>
            <person name="Wilson R.K."/>
        </authorList>
    </citation>
    <scope>NUCLEOTIDE SEQUENCE [LARGE SCALE GENOMIC DNA]</scope>
    <source>
        <strain>ATCC 9150 / SARB42</strain>
    </source>
</reference>
<name>PNCB_SALPA</name>
<gene>
    <name evidence="1" type="primary">pncB</name>
    <name type="ordered locus">SPA1794</name>
</gene>
<feature type="chain" id="PRO_0000205844" description="Nicotinate phosphoribosyltransferase">
    <location>
        <begin position="1"/>
        <end position="400"/>
    </location>
</feature>
<feature type="modified residue" description="Phosphohistidine; by autocatalysis" evidence="1">
    <location>
        <position position="220"/>
    </location>
</feature>
<protein>
    <recommendedName>
        <fullName evidence="1">Nicotinate phosphoribosyltransferase</fullName>
        <shortName evidence="1">NAPRTase</shortName>
        <ecNumber evidence="1">6.3.4.21</ecNumber>
    </recommendedName>
</protein>
<accession>Q5PGD8</accession>
<organism>
    <name type="scientific">Salmonella paratyphi A (strain ATCC 9150 / SARB42)</name>
    <dbReference type="NCBI Taxonomy" id="295319"/>
    <lineage>
        <taxon>Bacteria</taxon>
        <taxon>Pseudomonadati</taxon>
        <taxon>Pseudomonadota</taxon>
        <taxon>Gammaproteobacteria</taxon>
        <taxon>Enterobacterales</taxon>
        <taxon>Enterobacteriaceae</taxon>
        <taxon>Salmonella</taxon>
    </lineage>
</organism>
<dbReference type="EC" id="6.3.4.21" evidence="1"/>
<dbReference type="EMBL" id="CP000026">
    <property type="protein sequence ID" value="AAV77710.1"/>
    <property type="molecule type" value="Genomic_DNA"/>
</dbReference>
<dbReference type="RefSeq" id="WP_000191406.1">
    <property type="nucleotide sequence ID" value="NC_006511.1"/>
</dbReference>
<dbReference type="SMR" id="Q5PGD8"/>
<dbReference type="KEGG" id="spt:SPA1794"/>
<dbReference type="HOGENOM" id="CLU_030991_1_0_6"/>
<dbReference type="UniPathway" id="UPA00253">
    <property type="reaction ID" value="UER00457"/>
</dbReference>
<dbReference type="Proteomes" id="UP000008185">
    <property type="component" value="Chromosome"/>
</dbReference>
<dbReference type="GO" id="GO:0005829">
    <property type="term" value="C:cytosol"/>
    <property type="evidence" value="ECO:0007669"/>
    <property type="project" value="TreeGrafter"/>
</dbReference>
<dbReference type="GO" id="GO:0004516">
    <property type="term" value="F:nicotinate phosphoribosyltransferase activity"/>
    <property type="evidence" value="ECO:0007669"/>
    <property type="project" value="UniProtKB-UniRule"/>
</dbReference>
<dbReference type="GO" id="GO:0034355">
    <property type="term" value="P:NAD biosynthetic process via the salvage pathway"/>
    <property type="evidence" value="ECO:0007669"/>
    <property type="project" value="TreeGrafter"/>
</dbReference>
<dbReference type="CDD" id="cd01401">
    <property type="entry name" value="PncB_like"/>
    <property type="match status" value="1"/>
</dbReference>
<dbReference type="FunFam" id="3.20.140.10:FF:000001">
    <property type="entry name" value="Nicotinate phosphoribosyltransferase"/>
    <property type="match status" value="1"/>
</dbReference>
<dbReference type="Gene3D" id="3.20.140.10">
    <property type="entry name" value="nicotinate phosphoribosyltransferase"/>
    <property type="match status" value="1"/>
</dbReference>
<dbReference type="HAMAP" id="MF_00570">
    <property type="entry name" value="NAPRTase"/>
    <property type="match status" value="1"/>
</dbReference>
<dbReference type="InterPro" id="IPR041525">
    <property type="entry name" value="N/Namide_PRibTrfase"/>
</dbReference>
<dbReference type="InterPro" id="IPR040727">
    <property type="entry name" value="NAPRTase_N"/>
</dbReference>
<dbReference type="InterPro" id="IPR006406">
    <property type="entry name" value="Nic_PRibTrfase"/>
</dbReference>
<dbReference type="InterPro" id="IPR007229">
    <property type="entry name" value="Nic_PRibTrfase-Fam"/>
</dbReference>
<dbReference type="InterPro" id="IPR036068">
    <property type="entry name" value="Nicotinate_pribotase-like_C"/>
</dbReference>
<dbReference type="NCBIfam" id="TIGR01514">
    <property type="entry name" value="NAPRTase"/>
    <property type="match status" value="1"/>
</dbReference>
<dbReference type="NCBIfam" id="NF003704">
    <property type="entry name" value="PRK05321.1"/>
    <property type="match status" value="1"/>
</dbReference>
<dbReference type="PANTHER" id="PTHR11098">
    <property type="entry name" value="NICOTINATE PHOSPHORIBOSYLTRANSFERASE"/>
    <property type="match status" value="1"/>
</dbReference>
<dbReference type="PANTHER" id="PTHR11098:SF1">
    <property type="entry name" value="NICOTINATE PHOSPHORIBOSYLTRANSFERASE"/>
    <property type="match status" value="1"/>
</dbReference>
<dbReference type="Pfam" id="PF04095">
    <property type="entry name" value="NAPRTase"/>
    <property type="match status" value="1"/>
</dbReference>
<dbReference type="Pfam" id="PF17767">
    <property type="entry name" value="NAPRTase_N"/>
    <property type="match status" value="1"/>
</dbReference>
<dbReference type="PIRSF" id="PIRSF000484">
    <property type="entry name" value="NAPRT"/>
    <property type="match status" value="1"/>
</dbReference>
<dbReference type="SUPFAM" id="SSF51690">
    <property type="entry name" value="Nicotinate/Quinolinate PRTase C-terminal domain-like"/>
    <property type="match status" value="1"/>
</dbReference>
<dbReference type="SUPFAM" id="SSF54675">
    <property type="entry name" value="Nicotinate/Quinolinate PRTase N-terminal domain-like"/>
    <property type="match status" value="1"/>
</dbReference>
<comment type="function">
    <text evidence="1">Catalyzes the synthesis of beta-nicotinate D-ribonucleotide from nicotinate and 5-phospho-D-ribose 1-phosphate at the expense of ATP.</text>
</comment>
<comment type="catalytic activity">
    <reaction evidence="1">
        <text>nicotinate + 5-phospho-alpha-D-ribose 1-diphosphate + ATP + H2O = nicotinate beta-D-ribonucleotide + ADP + phosphate + diphosphate</text>
        <dbReference type="Rhea" id="RHEA:36163"/>
        <dbReference type="ChEBI" id="CHEBI:15377"/>
        <dbReference type="ChEBI" id="CHEBI:30616"/>
        <dbReference type="ChEBI" id="CHEBI:32544"/>
        <dbReference type="ChEBI" id="CHEBI:33019"/>
        <dbReference type="ChEBI" id="CHEBI:43474"/>
        <dbReference type="ChEBI" id="CHEBI:57502"/>
        <dbReference type="ChEBI" id="CHEBI:58017"/>
        <dbReference type="ChEBI" id="CHEBI:456216"/>
        <dbReference type="EC" id="6.3.4.21"/>
    </reaction>
</comment>
<comment type="pathway">
    <text evidence="1">Cofactor biosynthesis; NAD(+) biosynthesis; nicotinate D-ribonucleotide from nicotinate: step 1/1.</text>
</comment>
<comment type="PTM">
    <text evidence="1">Transiently phosphorylated on a His residue during the reaction cycle. Phosphorylation strongly increases the affinity for substrates and increases the rate of nicotinate D-ribonucleotide production. Dephosphorylation regenerates the low-affinity form of the enzyme, leading to product release.</text>
</comment>
<comment type="similarity">
    <text evidence="1">Belongs to the NAPRTase family.</text>
</comment>